<accession>P50165</accession>
<evidence type="ECO:0000250" key="1"/>
<evidence type="ECO:0000255" key="2">
    <source>
        <dbReference type="PROSITE-ProRule" id="PRU10001"/>
    </source>
</evidence>
<evidence type="ECO:0000305" key="3"/>
<keyword id="KW-0521">NADP</keyword>
<keyword id="KW-0560">Oxidoreductase</keyword>
<reference key="1">
    <citation type="journal article" date="1993" name="Proc. Natl. Acad. Sci. U.S.A.">
        <title>Two tropinone reductases with different stereospecificities are short-chain dehydrogenases evolved from a common ancestor.</title>
        <authorList>
            <person name="Nakajima K."/>
            <person name="Hashimoto T."/>
            <person name="Yamada Y."/>
        </authorList>
    </citation>
    <scope>NUCLEOTIDE SEQUENCE [MRNA]</scope>
    <source>
        <tissue>Root</tissue>
    </source>
</reference>
<proteinExistence type="evidence at transcript level"/>
<sequence>MAGREIGGGDRRWSLRGMTALVTGGTRGIGYAIVEELANFGAEVYTCSRSQNDLDECLEKWRRKGFKVSGPVCDVSSISQRQTLMESVTSSFNGKLNILINNAGTTIPKEATNFTAEDYSIIMGTNFEASYNLCQLAHPLLKASGNASIVFNSSAAGVIAVPLSSIYAASKGAINQVTKSLACEWAKDSIRVNAVAPWIINTPIIEAACQVPSQKKNIESLIGRAPMKRAGEPSEVSSLVTYLCLPTASYITGQIICVDGGYTVNGFI</sequence>
<organism>
    <name type="scientific">Datura stramonium</name>
    <name type="common">Jimsonweed</name>
    <name type="synonym">Common thornapple</name>
    <dbReference type="NCBI Taxonomy" id="4076"/>
    <lineage>
        <taxon>Eukaryota</taxon>
        <taxon>Viridiplantae</taxon>
        <taxon>Streptophyta</taxon>
        <taxon>Embryophyta</taxon>
        <taxon>Tracheophyta</taxon>
        <taxon>Spermatophyta</taxon>
        <taxon>Magnoliopsida</taxon>
        <taxon>eudicotyledons</taxon>
        <taxon>Gunneridae</taxon>
        <taxon>Pentapetalae</taxon>
        <taxon>asterids</taxon>
        <taxon>lamiids</taxon>
        <taxon>Solanales</taxon>
        <taxon>Solanaceae</taxon>
        <taxon>Solanoideae</taxon>
        <taxon>Datureae</taxon>
        <taxon>Datura</taxon>
    </lineage>
</organism>
<comment type="similarity">
    <text evidence="3">Belongs to the short-chain dehydrogenases/reductases (SDR) family.</text>
</comment>
<dbReference type="EC" id="1.1.1.-"/>
<dbReference type="EMBL" id="L20475">
    <property type="protein sequence ID" value="AAA33280.1"/>
    <property type="molecule type" value="mRNA"/>
</dbReference>
<dbReference type="PIR" id="C48674">
    <property type="entry name" value="C48674"/>
</dbReference>
<dbReference type="SMR" id="P50165"/>
<dbReference type="GO" id="GO:0016491">
    <property type="term" value="F:oxidoreductase activity"/>
    <property type="evidence" value="ECO:0007669"/>
    <property type="project" value="UniProtKB-KW"/>
</dbReference>
<dbReference type="CDD" id="cd05329">
    <property type="entry name" value="TR_SDR_c"/>
    <property type="match status" value="1"/>
</dbReference>
<dbReference type="FunFam" id="3.40.50.720:FF:000084">
    <property type="entry name" value="Short-chain dehydrogenase reductase"/>
    <property type="match status" value="1"/>
</dbReference>
<dbReference type="Gene3D" id="3.40.50.720">
    <property type="entry name" value="NAD(P)-binding Rossmann-like Domain"/>
    <property type="match status" value="1"/>
</dbReference>
<dbReference type="InterPro" id="IPR036291">
    <property type="entry name" value="NAD(P)-bd_dom_sf"/>
</dbReference>
<dbReference type="InterPro" id="IPR020904">
    <property type="entry name" value="Sc_DH/Rdtase_CS"/>
</dbReference>
<dbReference type="InterPro" id="IPR002347">
    <property type="entry name" value="SDR_fam"/>
</dbReference>
<dbReference type="InterPro" id="IPR045000">
    <property type="entry name" value="TR"/>
</dbReference>
<dbReference type="PANTHER" id="PTHR42898:SF79">
    <property type="entry name" value="NAD(P)-BINDING ROSSMANN-FOLD PROTEIN"/>
    <property type="match status" value="1"/>
</dbReference>
<dbReference type="PANTHER" id="PTHR42898">
    <property type="entry name" value="TROPINONE REDUCTASE"/>
    <property type="match status" value="1"/>
</dbReference>
<dbReference type="Pfam" id="PF13561">
    <property type="entry name" value="adh_short_C2"/>
    <property type="match status" value="1"/>
</dbReference>
<dbReference type="PRINTS" id="PR00081">
    <property type="entry name" value="GDHRDH"/>
</dbReference>
<dbReference type="PRINTS" id="PR00080">
    <property type="entry name" value="SDRFAMILY"/>
</dbReference>
<dbReference type="SUPFAM" id="SSF51735">
    <property type="entry name" value="NAD(P)-binding Rossmann-fold domains"/>
    <property type="match status" value="1"/>
</dbReference>
<dbReference type="PROSITE" id="PS00061">
    <property type="entry name" value="ADH_SHORT"/>
    <property type="match status" value="1"/>
</dbReference>
<name>TRNH_DATST</name>
<feature type="chain" id="PRO_0000054788" description="Tropinone reductase homolog">
    <location>
        <begin position="1"/>
        <end position="268"/>
    </location>
</feature>
<feature type="active site" description="Proton acceptor" evidence="2">
    <location>
        <position position="167"/>
    </location>
</feature>
<feature type="binding site" evidence="1">
    <location>
        <begin position="21"/>
        <end position="45"/>
    </location>
    <ligand>
        <name>NADP(+)</name>
        <dbReference type="ChEBI" id="CHEBI:58349"/>
    </ligand>
</feature>
<feature type="binding site" evidence="1">
    <location>
        <position position="154"/>
    </location>
    <ligand>
        <name>substrate</name>
    </ligand>
</feature>
<protein>
    <recommendedName>
        <fullName>Tropinone reductase homolog</fullName>
        <ecNumber>1.1.1.-</ecNumber>
    </recommendedName>
    <alternativeName>
        <fullName>P29X</fullName>
    </alternativeName>
</protein>